<feature type="chain" id="PRO_0000262974" description="Putative ribose/galactose/methyl galactoside import ATP-binding protein 1">
    <location>
        <begin position="1"/>
        <end position="524"/>
    </location>
</feature>
<feature type="domain" description="ABC transporter 1" evidence="1">
    <location>
        <begin position="35"/>
        <end position="271"/>
    </location>
</feature>
<feature type="domain" description="ABC transporter 2" evidence="1">
    <location>
        <begin position="281"/>
        <end position="520"/>
    </location>
</feature>
<feature type="binding site" evidence="1">
    <location>
        <begin position="67"/>
        <end position="74"/>
    </location>
    <ligand>
        <name>ATP</name>
        <dbReference type="ChEBI" id="CHEBI:30616"/>
    </ligand>
</feature>
<reference key="1">
    <citation type="submission" date="2006-05" db="EMBL/GenBank/DDBJ databases">
        <title>Complete sequence of chromosome 1 of Burkholderia cenocepacia AU 1054.</title>
        <authorList>
            <consortium name="US DOE Joint Genome Institute"/>
            <person name="Copeland A."/>
            <person name="Lucas S."/>
            <person name="Lapidus A."/>
            <person name="Barry K."/>
            <person name="Detter J.C."/>
            <person name="Glavina del Rio T."/>
            <person name="Hammon N."/>
            <person name="Israni S."/>
            <person name="Dalin E."/>
            <person name="Tice H."/>
            <person name="Pitluck S."/>
            <person name="Chain P."/>
            <person name="Malfatti S."/>
            <person name="Shin M."/>
            <person name="Vergez L."/>
            <person name="Schmutz J."/>
            <person name="Larimer F."/>
            <person name="Land M."/>
            <person name="Hauser L."/>
            <person name="Kyrpides N."/>
            <person name="Lykidis A."/>
            <person name="LiPuma J.J."/>
            <person name="Konstantinidis K."/>
            <person name="Tiedje J.M."/>
            <person name="Richardson P."/>
        </authorList>
    </citation>
    <scope>NUCLEOTIDE SEQUENCE [LARGE SCALE GENOMIC DNA]</scope>
    <source>
        <strain>AU 1054</strain>
    </source>
</reference>
<protein>
    <recommendedName>
        <fullName evidence="1">Putative ribose/galactose/methyl galactoside import ATP-binding protein 1</fullName>
        <ecNumber evidence="1">7.5.2.11</ecNumber>
        <ecNumber evidence="1">7.5.2.7</ecNumber>
    </recommendedName>
</protein>
<dbReference type="EC" id="7.5.2.11" evidence="1"/>
<dbReference type="EC" id="7.5.2.7" evidence="1"/>
<dbReference type="EMBL" id="CP000378">
    <property type="protein sequence ID" value="ABF75852.1"/>
    <property type="molecule type" value="Genomic_DNA"/>
</dbReference>
<dbReference type="SMR" id="Q1BX03"/>
<dbReference type="HOGENOM" id="CLU_000604_92_3_4"/>
<dbReference type="GO" id="GO:0005886">
    <property type="term" value="C:plasma membrane"/>
    <property type="evidence" value="ECO:0007669"/>
    <property type="project" value="UniProtKB-SubCell"/>
</dbReference>
<dbReference type="GO" id="GO:0015611">
    <property type="term" value="F:ABC-type D-ribose transporter activity"/>
    <property type="evidence" value="ECO:0007669"/>
    <property type="project" value="UniProtKB-EC"/>
</dbReference>
<dbReference type="GO" id="GO:0005524">
    <property type="term" value="F:ATP binding"/>
    <property type="evidence" value="ECO:0007669"/>
    <property type="project" value="UniProtKB-KW"/>
</dbReference>
<dbReference type="GO" id="GO:0016887">
    <property type="term" value="F:ATP hydrolysis activity"/>
    <property type="evidence" value="ECO:0007669"/>
    <property type="project" value="InterPro"/>
</dbReference>
<dbReference type="CDD" id="cd03216">
    <property type="entry name" value="ABC_Carb_Monos_I"/>
    <property type="match status" value="1"/>
</dbReference>
<dbReference type="CDD" id="cd03215">
    <property type="entry name" value="ABC_Carb_Monos_II"/>
    <property type="match status" value="1"/>
</dbReference>
<dbReference type="FunFam" id="3.40.50.300:FF:000127">
    <property type="entry name" value="Ribose import ATP-binding protein RbsA"/>
    <property type="match status" value="1"/>
</dbReference>
<dbReference type="Gene3D" id="3.40.50.300">
    <property type="entry name" value="P-loop containing nucleotide triphosphate hydrolases"/>
    <property type="match status" value="2"/>
</dbReference>
<dbReference type="InterPro" id="IPR003593">
    <property type="entry name" value="AAA+_ATPase"/>
</dbReference>
<dbReference type="InterPro" id="IPR050107">
    <property type="entry name" value="ABC_carbohydrate_import_ATPase"/>
</dbReference>
<dbReference type="InterPro" id="IPR003439">
    <property type="entry name" value="ABC_transporter-like_ATP-bd"/>
</dbReference>
<dbReference type="InterPro" id="IPR017871">
    <property type="entry name" value="ABC_transporter-like_CS"/>
</dbReference>
<dbReference type="InterPro" id="IPR027417">
    <property type="entry name" value="P-loop_NTPase"/>
</dbReference>
<dbReference type="PANTHER" id="PTHR43790">
    <property type="entry name" value="CARBOHYDRATE TRANSPORT ATP-BINDING PROTEIN MG119-RELATED"/>
    <property type="match status" value="1"/>
</dbReference>
<dbReference type="PANTHER" id="PTHR43790:SF7">
    <property type="entry name" value="GALACTOSE_METHYL GALACTOSIDE IMPORT ATP-BINDING PROTEIN MGLA"/>
    <property type="match status" value="1"/>
</dbReference>
<dbReference type="Pfam" id="PF00005">
    <property type="entry name" value="ABC_tran"/>
    <property type="match status" value="2"/>
</dbReference>
<dbReference type="SMART" id="SM00382">
    <property type="entry name" value="AAA"/>
    <property type="match status" value="2"/>
</dbReference>
<dbReference type="SUPFAM" id="SSF52540">
    <property type="entry name" value="P-loop containing nucleoside triphosphate hydrolases"/>
    <property type="match status" value="2"/>
</dbReference>
<dbReference type="PROSITE" id="PS00211">
    <property type="entry name" value="ABC_TRANSPORTER_1"/>
    <property type="match status" value="1"/>
</dbReference>
<dbReference type="PROSITE" id="PS50893">
    <property type="entry name" value="ABC_TRANSPORTER_2"/>
    <property type="match status" value="2"/>
</dbReference>
<dbReference type="PROSITE" id="PS51260">
    <property type="entry name" value="MGLA"/>
    <property type="match status" value="1"/>
</dbReference>
<dbReference type="PROSITE" id="PS51254">
    <property type="entry name" value="RBSA"/>
    <property type="match status" value="1"/>
</dbReference>
<accession>Q1BX03</accession>
<sequence length="524" mass="57580">MFTARIARSMASESAPAASSVAPGSSGAPMADCVLEVRGVGKSFPGVVALDGVQFRVRRGTVHALMGENGAGKSTLMKIIAGVYTPDQGEILINGEPVVLNGPLDALDRGIAMIHQELNLMPYMTVAENIWIRREPKNRFGLIDHAELRRRTAALFERLSIDIDPETDVRTLTVASRQMVEIAKAVSFDSDVLIMDEPTSALTDKEVTHLFRIIRQLREQGKGIVYITHKMNELFEIADEFSVFRDGKYIGTHASSDVTRDDIIRMMVGREITQMFPKEEVPIGDVVLSVKDLCVDGVFRDVSFELRAGEILGVAGLVGSGRSNVAEALFGVVPATSGEIRIDGKPVRISTPAQAMKHGMAFLTEDRKDSGCFLNLDLLANMEAAVLSRRYVKFNFVQQAQLKRDCEEMSRMLRVKSPGLHEEIQNLSGGNQQKVLIGRWLLTQPRILILDEPTRGIDVGAKAEIHRLVSALAGKGVAVLMISSEMPEVLGMSDRVMVMHEGRMTGIVDRKDADQVRIMDLASR</sequence>
<name>RGMG1_BURO1</name>
<evidence type="ECO:0000255" key="1">
    <source>
        <dbReference type="HAMAP-Rule" id="MF_01717"/>
    </source>
</evidence>
<proteinExistence type="inferred from homology"/>
<keyword id="KW-0067">ATP-binding</keyword>
<keyword id="KW-0997">Cell inner membrane</keyword>
<keyword id="KW-1003">Cell membrane</keyword>
<keyword id="KW-0472">Membrane</keyword>
<keyword id="KW-0547">Nucleotide-binding</keyword>
<keyword id="KW-0677">Repeat</keyword>
<keyword id="KW-0762">Sugar transport</keyword>
<keyword id="KW-1278">Translocase</keyword>
<keyword id="KW-0813">Transport</keyword>
<gene>
    <name type="ordered locus">Bcen_0943</name>
</gene>
<organism>
    <name type="scientific">Burkholderia orbicola (strain AU 1054)</name>
    <dbReference type="NCBI Taxonomy" id="331271"/>
    <lineage>
        <taxon>Bacteria</taxon>
        <taxon>Pseudomonadati</taxon>
        <taxon>Pseudomonadota</taxon>
        <taxon>Betaproteobacteria</taxon>
        <taxon>Burkholderiales</taxon>
        <taxon>Burkholderiaceae</taxon>
        <taxon>Burkholderia</taxon>
        <taxon>Burkholderia cepacia complex</taxon>
        <taxon>Burkholderia orbicola</taxon>
    </lineage>
</organism>
<comment type="function">
    <text evidence="1">Part of an ABC transporter complex involved in carbohydrate import. Could be involved in ribose, galactose and/or methyl galactoside import. Responsible for energy coupling to the transport system.</text>
</comment>
<comment type="catalytic activity">
    <reaction evidence="1">
        <text>D-ribose(out) + ATP + H2O = D-ribose(in) + ADP + phosphate + H(+)</text>
        <dbReference type="Rhea" id="RHEA:29903"/>
        <dbReference type="ChEBI" id="CHEBI:15377"/>
        <dbReference type="ChEBI" id="CHEBI:15378"/>
        <dbReference type="ChEBI" id="CHEBI:30616"/>
        <dbReference type="ChEBI" id="CHEBI:43474"/>
        <dbReference type="ChEBI" id="CHEBI:47013"/>
        <dbReference type="ChEBI" id="CHEBI:456216"/>
        <dbReference type="EC" id="7.5.2.7"/>
    </reaction>
</comment>
<comment type="catalytic activity">
    <reaction evidence="1">
        <text>D-galactose(out) + ATP + H2O = D-galactose(in) + ADP + phosphate + H(+)</text>
        <dbReference type="Rhea" id="RHEA:60156"/>
        <dbReference type="ChEBI" id="CHEBI:4139"/>
        <dbReference type="ChEBI" id="CHEBI:15377"/>
        <dbReference type="ChEBI" id="CHEBI:15378"/>
        <dbReference type="ChEBI" id="CHEBI:30616"/>
        <dbReference type="ChEBI" id="CHEBI:43474"/>
        <dbReference type="ChEBI" id="CHEBI:456216"/>
        <dbReference type="EC" id="7.5.2.11"/>
    </reaction>
</comment>
<comment type="subcellular location">
    <subcellularLocation>
        <location evidence="1">Cell inner membrane</location>
        <topology evidence="1">Peripheral membrane protein</topology>
    </subcellularLocation>
</comment>
<comment type="similarity">
    <text evidence="1">Belongs to the ABC transporter superfamily. Carbohydrate importer 2 (CUT2) (TC 3.A.1.2) family.</text>
</comment>